<sequence length="257" mass="27546">MADPGPFVADLRAESDDLDALVAHLPADRWADPTPAPGWTIAHQIGHLLWTDRVALTAVTDEAGFAELMTAAAANPAGFVDDAATELAAVSPAELLTDWRVTRGRLHEELLAVPDGRKLAWFGPPMSAASMATARLMETWAHGLDVADALGVIRPATQRLRSIAHLGVRTRDYAFIVNNLTPPAEPFLVELRGPSGDTWSWGPSDAAQRVTGSAEDFCFLVTQRRALSTLDVNAVGEDAQRWLTIAQAFAGPPGRGR</sequence>
<reference key="1">
    <citation type="journal article" date="1998" name="Nature">
        <title>Deciphering the biology of Mycobacterium tuberculosis from the complete genome sequence.</title>
        <authorList>
            <person name="Cole S.T."/>
            <person name="Brosch R."/>
            <person name="Parkhill J."/>
            <person name="Garnier T."/>
            <person name="Churcher C.M."/>
            <person name="Harris D.E."/>
            <person name="Gordon S.V."/>
            <person name="Eiglmeier K."/>
            <person name="Gas S."/>
            <person name="Barry C.E. III"/>
            <person name="Tekaia F."/>
            <person name="Badcock K."/>
            <person name="Basham D."/>
            <person name="Brown D."/>
            <person name="Chillingworth T."/>
            <person name="Connor R."/>
            <person name="Davies R.M."/>
            <person name="Devlin K."/>
            <person name="Feltwell T."/>
            <person name="Gentles S."/>
            <person name="Hamlin N."/>
            <person name="Holroyd S."/>
            <person name="Hornsby T."/>
            <person name="Jagels K."/>
            <person name="Krogh A."/>
            <person name="McLean J."/>
            <person name="Moule S."/>
            <person name="Murphy L.D."/>
            <person name="Oliver S."/>
            <person name="Osborne J."/>
            <person name="Quail M.A."/>
            <person name="Rajandream M.A."/>
            <person name="Rogers J."/>
            <person name="Rutter S."/>
            <person name="Seeger K."/>
            <person name="Skelton S."/>
            <person name="Squares S."/>
            <person name="Squares R."/>
            <person name="Sulston J.E."/>
            <person name="Taylor K."/>
            <person name="Whitehead S."/>
            <person name="Barrell B.G."/>
        </authorList>
    </citation>
    <scope>NUCLEOTIDE SEQUENCE [LARGE SCALE GENOMIC DNA]</scope>
    <source>
        <strain>ATCC 25618 / H37Rv</strain>
    </source>
</reference>
<reference key="2">
    <citation type="journal article" date="2011" name="Mol. Cell. Proteomics">
        <title>Proteogenomic analysis of Mycobacterium tuberculosis by high resolution mass spectrometry.</title>
        <authorList>
            <person name="Kelkar D.S."/>
            <person name="Kumar D."/>
            <person name="Kumar P."/>
            <person name="Balakrishnan L."/>
            <person name="Muthusamy B."/>
            <person name="Yadav A.K."/>
            <person name="Shrivastava P."/>
            <person name="Marimuthu A."/>
            <person name="Anand S."/>
            <person name="Sundaram H."/>
            <person name="Kingsbury R."/>
            <person name="Harsha H.C."/>
            <person name="Nair B."/>
            <person name="Prasad T.S."/>
            <person name="Chauhan D.S."/>
            <person name="Katoch K."/>
            <person name="Katoch V.M."/>
            <person name="Kumar P."/>
            <person name="Chaerkady R."/>
            <person name="Ramachandran S."/>
            <person name="Dash D."/>
            <person name="Pandey A."/>
        </authorList>
    </citation>
    <scope>IDENTIFICATION BY MASS SPECTROMETRY [LARGE SCALE ANALYSIS]</scope>
    <source>
        <strain>ATCC 25618 / H37Rv</strain>
    </source>
</reference>
<dbReference type="EMBL" id="AL123456">
    <property type="protein sequence ID" value="CCP42758.1"/>
    <property type="molecule type" value="Genomic_DNA"/>
</dbReference>
<dbReference type="PIR" id="B70702">
    <property type="entry name" value="B70702"/>
</dbReference>
<dbReference type="RefSeq" id="NP_214550.1">
    <property type="nucleotide sequence ID" value="NC_000962.3"/>
</dbReference>
<dbReference type="RefSeq" id="WP_003400427.1">
    <property type="nucleotide sequence ID" value="NZ_NVQJ01000005.1"/>
</dbReference>
<dbReference type="SMR" id="P9WM91"/>
<dbReference type="STRING" id="83332.Rv0036c"/>
<dbReference type="PaxDb" id="83332-Rv0036c"/>
<dbReference type="GeneID" id="887043"/>
<dbReference type="KEGG" id="mtu:Rv0036c"/>
<dbReference type="KEGG" id="mtv:RVBD_0036c"/>
<dbReference type="TubercuList" id="Rv0036c"/>
<dbReference type="eggNOG" id="ENOG502Z7S3">
    <property type="taxonomic scope" value="Bacteria"/>
</dbReference>
<dbReference type="InParanoid" id="P9WM91"/>
<dbReference type="OrthoDB" id="113180at2"/>
<dbReference type="PhylomeDB" id="P9WM91"/>
<dbReference type="Proteomes" id="UP000001584">
    <property type="component" value="Chromosome"/>
</dbReference>
<dbReference type="GO" id="GO:0009274">
    <property type="term" value="C:peptidoglycan-based cell wall"/>
    <property type="evidence" value="ECO:0007005"/>
    <property type="project" value="MTBBASE"/>
</dbReference>
<dbReference type="GO" id="GO:0005886">
    <property type="term" value="C:plasma membrane"/>
    <property type="evidence" value="ECO:0007005"/>
    <property type="project" value="MTBBASE"/>
</dbReference>
<dbReference type="GO" id="GO:0046872">
    <property type="term" value="F:metal ion binding"/>
    <property type="evidence" value="ECO:0007669"/>
    <property type="project" value="InterPro"/>
</dbReference>
<dbReference type="FunFam" id="1.20.120.450:FF:000003">
    <property type="entry name" value="TIGR03084 family protein"/>
    <property type="match status" value="1"/>
</dbReference>
<dbReference type="Gene3D" id="1.20.120.450">
    <property type="entry name" value="dinb family like domain"/>
    <property type="match status" value="1"/>
</dbReference>
<dbReference type="InterPro" id="IPR017518">
    <property type="entry name" value="CHP03084"/>
</dbReference>
<dbReference type="InterPro" id="IPR034660">
    <property type="entry name" value="DinB/YfiT-like"/>
</dbReference>
<dbReference type="InterPro" id="IPR017517">
    <property type="entry name" value="Maleyloyr_isom"/>
</dbReference>
<dbReference type="InterPro" id="IPR024344">
    <property type="entry name" value="MDMPI_metal-binding"/>
</dbReference>
<dbReference type="InterPro" id="IPR013917">
    <property type="entry name" value="tRNA_wybutosine-synth"/>
</dbReference>
<dbReference type="NCBIfam" id="TIGR03083">
    <property type="entry name" value="maleylpyruvate isomerase family mycothiol-dependent enzyme"/>
    <property type="match status" value="1"/>
</dbReference>
<dbReference type="NCBIfam" id="TIGR03084">
    <property type="entry name" value="TIGR03084 family metal-binding protein"/>
    <property type="match status" value="1"/>
</dbReference>
<dbReference type="Pfam" id="PF11716">
    <property type="entry name" value="MDMPI_N"/>
    <property type="match status" value="1"/>
</dbReference>
<dbReference type="Pfam" id="PF08608">
    <property type="entry name" value="Wyosine_form"/>
    <property type="match status" value="1"/>
</dbReference>
<dbReference type="SUPFAM" id="SSF109854">
    <property type="entry name" value="DinB/YfiT-like putative metalloenzymes"/>
    <property type="match status" value="1"/>
</dbReference>
<feature type="chain" id="PRO_0000103652" description="Uncharacterized protein Rv0036c">
    <location>
        <begin position="1"/>
        <end position="257"/>
    </location>
</feature>
<organism>
    <name type="scientific">Mycobacterium tuberculosis (strain ATCC 25618 / H37Rv)</name>
    <dbReference type="NCBI Taxonomy" id="83332"/>
    <lineage>
        <taxon>Bacteria</taxon>
        <taxon>Bacillati</taxon>
        <taxon>Actinomycetota</taxon>
        <taxon>Actinomycetes</taxon>
        <taxon>Mycobacteriales</taxon>
        <taxon>Mycobacteriaceae</taxon>
        <taxon>Mycobacterium</taxon>
        <taxon>Mycobacterium tuberculosis complex</taxon>
    </lineage>
</organism>
<name>Y036_MYCTU</name>
<accession>P9WM91</accession>
<accession>L0T448</accession>
<accession>P64675</accession>
<accession>P71606</accession>
<protein>
    <recommendedName>
        <fullName>Uncharacterized protein Rv0036c</fullName>
    </recommendedName>
</protein>
<proteinExistence type="evidence at protein level"/>
<keyword id="KW-1185">Reference proteome</keyword>
<gene>
    <name type="ordered locus">Rv0036c</name>
    <name type="ORF">MTCY10H4.36c</name>
</gene>